<reference key="1">
    <citation type="journal article" date="2002" name="Nat. Genet.">
        <title>Genome sequence of the endocellular obligate symbiont of tsetse flies, Wigglesworthia glossinidia.</title>
        <authorList>
            <person name="Akman L."/>
            <person name="Yamashita A."/>
            <person name="Watanabe H."/>
            <person name="Oshima K."/>
            <person name="Shiba T."/>
            <person name="Hattori M."/>
            <person name="Aksoy S."/>
        </authorList>
    </citation>
    <scope>NUCLEOTIDE SEQUENCE [LARGE SCALE GENOMIC DNA]</scope>
</reference>
<keyword id="KW-1185">Reference proteome</keyword>
<keyword id="KW-0687">Ribonucleoprotein</keyword>
<keyword id="KW-0689">Ribosomal protein</keyword>
<keyword id="KW-0694">RNA-binding</keyword>
<keyword id="KW-0699">rRNA-binding</keyword>
<comment type="function">
    <text evidence="1">Protein S19 forms a complex with S13 that binds strongly to the 16S ribosomal RNA.</text>
</comment>
<comment type="similarity">
    <text evidence="1">Belongs to the universal ribosomal protein uS19 family.</text>
</comment>
<comment type="sequence caution" evidence="2">
    <conflict type="erroneous initiation">
        <sequence resource="EMBL-CDS" id="BAC24693"/>
    </conflict>
</comment>
<evidence type="ECO:0000255" key="1">
    <source>
        <dbReference type="HAMAP-Rule" id="MF_00531"/>
    </source>
</evidence>
<evidence type="ECO:0000305" key="2"/>
<organism>
    <name type="scientific">Wigglesworthia glossinidia brevipalpis</name>
    <dbReference type="NCBI Taxonomy" id="36870"/>
    <lineage>
        <taxon>Bacteria</taxon>
        <taxon>Pseudomonadati</taxon>
        <taxon>Pseudomonadota</taxon>
        <taxon>Gammaproteobacteria</taxon>
        <taxon>Enterobacterales</taxon>
        <taxon>Erwiniaceae</taxon>
        <taxon>Wigglesworthia</taxon>
    </lineage>
</organism>
<gene>
    <name evidence="1" type="primary">rpsS</name>
    <name type="ordered locus">WIGBR5470</name>
</gene>
<dbReference type="EMBL" id="BA000021">
    <property type="protein sequence ID" value="BAC24693.1"/>
    <property type="status" value="ALT_INIT"/>
    <property type="molecule type" value="Genomic_DNA"/>
</dbReference>
<dbReference type="SMR" id="Q8D208"/>
<dbReference type="STRING" id="36870.gene:10369056"/>
<dbReference type="KEGG" id="wbr:rpsS"/>
<dbReference type="eggNOG" id="COG0185">
    <property type="taxonomic scope" value="Bacteria"/>
</dbReference>
<dbReference type="HOGENOM" id="CLU_150100_0_0_6"/>
<dbReference type="OrthoDB" id="9797833at2"/>
<dbReference type="Proteomes" id="UP000000562">
    <property type="component" value="Chromosome"/>
</dbReference>
<dbReference type="GO" id="GO:0005737">
    <property type="term" value="C:cytoplasm"/>
    <property type="evidence" value="ECO:0007669"/>
    <property type="project" value="UniProtKB-ARBA"/>
</dbReference>
<dbReference type="GO" id="GO:0015935">
    <property type="term" value="C:small ribosomal subunit"/>
    <property type="evidence" value="ECO:0007669"/>
    <property type="project" value="InterPro"/>
</dbReference>
<dbReference type="GO" id="GO:0019843">
    <property type="term" value="F:rRNA binding"/>
    <property type="evidence" value="ECO:0007669"/>
    <property type="project" value="UniProtKB-UniRule"/>
</dbReference>
<dbReference type="GO" id="GO:0003735">
    <property type="term" value="F:structural constituent of ribosome"/>
    <property type="evidence" value="ECO:0007669"/>
    <property type="project" value="InterPro"/>
</dbReference>
<dbReference type="GO" id="GO:0000028">
    <property type="term" value="P:ribosomal small subunit assembly"/>
    <property type="evidence" value="ECO:0007669"/>
    <property type="project" value="TreeGrafter"/>
</dbReference>
<dbReference type="GO" id="GO:0006412">
    <property type="term" value="P:translation"/>
    <property type="evidence" value="ECO:0007669"/>
    <property type="project" value="UniProtKB-UniRule"/>
</dbReference>
<dbReference type="FunFam" id="3.30.860.10:FF:000001">
    <property type="entry name" value="30S ribosomal protein S19"/>
    <property type="match status" value="1"/>
</dbReference>
<dbReference type="Gene3D" id="3.30.860.10">
    <property type="entry name" value="30s Ribosomal Protein S19, Chain A"/>
    <property type="match status" value="1"/>
</dbReference>
<dbReference type="HAMAP" id="MF_00531">
    <property type="entry name" value="Ribosomal_uS19"/>
    <property type="match status" value="1"/>
</dbReference>
<dbReference type="InterPro" id="IPR002222">
    <property type="entry name" value="Ribosomal_uS19"/>
</dbReference>
<dbReference type="InterPro" id="IPR005732">
    <property type="entry name" value="Ribosomal_uS19_bac-type"/>
</dbReference>
<dbReference type="InterPro" id="IPR020934">
    <property type="entry name" value="Ribosomal_uS19_CS"/>
</dbReference>
<dbReference type="InterPro" id="IPR023575">
    <property type="entry name" value="Ribosomal_uS19_SF"/>
</dbReference>
<dbReference type="NCBIfam" id="TIGR01050">
    <property type="entry name" value="rpsS_bact"/>
    <property type="match status" value="1"/>
</dbReference>
<dbReference type="PANTHER" id="PTHR11880">
    <property type="entry name" value="RIBOSOMAL PROTEIN S19P FAMILY MEMBER"/>
    <property type="match status" value="1"/>
</dbReference>
<dbReference type="PANTHER" id="PTHR11880:SF8">
    <property type="entry name" value="SMALL RIBOSOMAL SUBUNIT PROTEIN US19M"/>
    <property type="match status" value="1"/>
</dbReference>
<dbReference type="Pfam" id="PF00203">
    <property type="entry name" value="Ribosomal_S19"/>
    <property type="match status" value="1"/>
</dbReference>
<dbReference type="PIRSF" id="PIRSF002144">
    <property type="entry name" value="Ribosomal_S19"/>
    <property type="match status" value="1"/>
</dbReference>
<dbReference type="PRINTS" id="PR00975">
    <property type="entry name" value="RIBOSOMALS19"/>
</dbReference>
<dbReference type="SUPFAM" id="SSF54570">
    <property type="entry name" value="Ribosomal protein S19"/>
    <property type="match status" value="1"/>
</dbReference>
<dbReference type="PROSITE" id="PS00323">
    <property type="entry name" value="RIBOSOMAL_S19"/>
    <property type="match status" value="1"/>
</dbReference>
<proteinExistence type="inferred from homology"/>
<accession>Q8D208</accession>
<protein>
    <recommendedName>
        <fullName evidence="1">Small ribosomal subunit protein uS19</fullName>
    </recommendedName>
    <alternativeName>
        <fullName evidence="2">30S ribosomal protein S19</fullName>
    </alternativeName>
</protein>
<name>RS19_WIGBR</name>
<sequence>MPRSLKKGPFIDFHLLKKIEEIKQTGKKKLIRTWSRRSTIFPDMIGMTISVHNGKQHIPIFIGDEMVGHKLGEFVPTRTYRGHSADKKIKKR</sequence>
<feature type="chain" id="PRO_0000129940" description="Small ribosomal subunit protein uS19">
    <location>
        <begin position="1"/>
        <end position="92"/>
    </location>
</feature>